<protein>
    <recommendedName>
        <fullName evidence="1">Iron-sulfur cluster assembly protein CyaY</fullName>
    </recommendedName>
</protein>
<proteinExistence type="inferred from homology"/>
<evidence type="ECO:0000255" key="1">
    <source>
        <dbReference type="HAMAP-Rule" id="MF_00142"/>
    </source>
</evidence>
<dbReference type="EMBL" id="CP000269">
    <property type="protein sequence ID" value="ABR90283.1"/>
    <property type="molecule type" value="Genomic_DNA"/>
</dbReference>
<dbReference type="RefSeq" id="WP_012081213.1">
    <property type="nucleotide sequence ID" value="NC_009659.1"/>
</dbReference>
<dbReference type="SMR" id="A6T3G3"/>
<dbReference type="STRING" id="375286.mma_3370"/>
<dbReference type="KEGG" id="mms:mma_3370"/>
<dbReference type="eggNOG" id="COG1965">
    <property type="taxonomic scope" value="Bacteria"/>
</dbReference>
<dbReference type="HOGENOM" id="CLU_080880_3_0_4"/>
<dbReference type="OrthoDB" id="285675at2"/>
<dbReference type="Proteomes" id="UP000006388">
    <property type="component" value="Chromosome"/>
</dbReference>
<dbReference type="GO" id="GO:0005737">
    <property type="term" value="C:cytoplasm"/>
    <property type="evidence" value="ECO:0007669"/>
    <property type="project" value="UniProtKB-ARBA"/>
</dbReference>
<dbReference type="GO" id="GO:0008199">
    <property type="term" value="F:ferric iron binding"/>
    <property type="evidence" value="ECO:0007669"/>
    <property type="project" value="InterPro"/>
</dbReference>
<dbReference type="GO" id="GO:0016226">
    <property type="term" value="P:iron-sulfur cluster assembly"/>
    <property type="evidence" value="ECO:0007669"/>
    <property type="project" value="UniProtKB-UniRule"/>
</dbReference>
<dbReference type="Gene3D" id="3.30.920.10">
    <property type="entry name" value="Frataxin/CyaY"/>
    <property type="match status" value="1"/>
</dbReference>
<dbReference type="HAMAP" id="MF_00142">
    <property type="entry name" value="CyaY"/>
    <property type="match status" value="1"/>
</dbReference>
<dbReference type="InterPro" id="IPR047584">
    <property type="entry name" value="CyaY"/>
</dbReference>
<dbReference type="InterPro" id="IPR002908">
    <property type="entry name" value="Frataxin/CyaY"/>
</dbReference>
<dbReference type="InterPro" id="IPR036524">
    <property type="entry name" value="Frataxin/CyaY_sf"/>
</dbReference>
<dbReference type="InterPro" id="IPR020895">
    <property type="entry name" value="Frataxin_CS"/>
</dbReference>
<dbReference type="NCBIfam" id="TIGR03421">
    <property type="entry name" value="FeS_CyaY"/>
    <property type="match status" value="1"/>
</dbReference>
<dbReference type="PANTHER" id="PTHR16821">
    <property type="entry name" value="FRATAXIN"/>
    <property type="match status" value="1"/>
</dbReference>
<dbReference type="PANTHER" id="PTHR16821:SF2">
    <property type="entry name" value="FRATAXIN, MITOCHONDRIAL"/>
    <property type="match status" value="1"/>
</dbReference>
<dbReference type="Pfam" id="PF01491">
    <property type="entry name" value="Frataxin_Cyay"/>
    <property type="match status" value="1"/>
</dbReference>
<dbReference type="SMART" id="SM01219">
    <property type="entry name" value="Frataxin_Cyay"/>
    <property type="match status" value="1"/>
</dbReference>
<dbReference type="SUPFAM" id="SSF55387">
    <property type="entry name" value="Frataxin/Nqo15-like"/>
    <property type="match status" value="1"/>
</dbReference>
<dbReference type="PROSITE" id="PS01344">
    <property type="entry name" value="FRATAXIN_1"/>
    <property type="match status" value="1"/>
</dbReference>
<dbReference type="PROSITE" id="PS50810">
    <property type="entry name" value="FRATAXIN_2"/>
    <property type="match status" value="1"/>
</dbReference>
<keyword id="KW-0408">Iron</keyword>
<keyword id="KW-0479">Metal-binding</keyword>
<gene>
    <name evidence="1" type="primary">cyaY</name>
    <name type="ordered locus">mma_3370</name>
</gene>
<organism>
    <name type="scientific">Janthinobacterium sp. (strain Marseille)</name>
    <name type="common">Minibacterium massiliensis</name>
    <dbReference type="NCBI Taxonomy" id="375286"/>
    <lineage>
        <taxon>Bacteria</taxon>
        <taxon>Pseudomonadati</taxon>
        <taxon>Pseudomonadota</taxon>
        <taxon>Betaproteobacteria</taxon>
        <taxon>Burkholderiales</taxon>
        <taxon>Oxalobacteraceae</taxon>
        <taxon>Janthinobacterium</taxon>
    </lineage>
</organism>
<name>CYAY_JANMA</name>
<sequence>MTESEFLKQAEATLDQIEASLEDLADTSDLDVECTRSGNVLEIEFIDNGSKIIVNSQAPMQELWVAAKSGGFHFKATGTQWINTRDGAELFAALSEMVSKQGGIPVVLQDAN</sequence>
<comment type="function">
    <text evidence="1">Involved in iron-sulfur (Fe-S) cluster assembly. May act as a regulator of Fe-S biogenesis.</text>
</comment>
<comment type="similarity">
    <text evidence="1">Belongs to the frataxin family.</text>
</comment>
<reference key="1">
    <citation type="journal article" date="2007" name="PLoS Genet.">
        <title>Genome analysis of Minibacterium massiliensis highlights the convergent evolution of water-living bacteria.</title>
        <authorList>
            <person name="Audic S."/>
            <person name="Robert C."/>
            <person name="Campagna B."/>
            <person name="Parinello H."/>
            <person name="Claverie J.-M."/>
            <person name="Raoult D."/>
            <person name="Drancourt M."/>
        </authorList>
    </citation>
    <scope>NUCLEOTIDE SEQUENCE [LARGE SCALE GENOMIC DNA]</scope>
    <source>
        <strain>Marseille</strain>
    </source>
</reference>
<accession>A6T3G3</accession>
<feature type="chain" id="PRO_1000076545" description="Iron-sulfur cluster assembly protein CyaY">
    <location>
        <begin position="1"/>
        <end position="112"/>
    </location>
</feature>